<evidence type="ECO:0000255" key="1">
    <source>
        <dbReference type="HAMAP-Rule" id="MF_00046"/>
    </source>
</evidence>
<protein>
    <recommendedName>
        <fullName evidence="1">UDP-N-acetylmuramate--L-alanine ligase</fullName>
        <ecNumber evidence="1">6.3.2.8</ecNumber>
    </recommendedName>
    <alternativeName>
        <fullName evidence="1">UDP-N-acetylmuramoyl-L-alanine synthetase</fullName>
    </alternativeName>
</protein>
<name>MURC_PSE14</name>
<gene>
    <name evidence="1" type="primary">murC</name>
    <name type="ordered locus">PSPPH_4107</name>
</gene>
<feature type="chain" id="PRO_0000242578" description="UDP-N-acetylmuramate--L-alanine ligase">
    <location>
        <begin position="1"/>
        <end position="486"/>
    </location>
</feature>
<feature type="binding site" evidence="1">
    <location>
        <begin position="123"/>
        <end position="129"/>
    </location>
    <ligand>
        <name>ATP</name>
        <dbReference type="ChEBI" id="CHEBI:30616"/>
    </ligand>
</feature>
<accession>Q48EF9</accession>
<organism>
    <name type="scientific">Pseudomonas savastanoi pv. phaseolicola (strain 1448A / Race 6)</name>
    <name type="common">Pseudomonas syringae pv. phaseolicola (strain 1448A / Race 6)</name>
    <dbReference type="NCBI Taxonomy" id="264730"/>
    <lineage>
        <taxon>Bacteria</taxon>
        <taxon>Pseudomonadati</taxon>
        <taxon>Pseudomonadota</taxon>
        <taxon>Gammaproteobacteria</taxon>
        <taxon>Pseudomonadales</taxon>
        <taxon>Pseudomonadaceae</taxon>
        <taxon>Pseudomonas</taxon>
    </lineage>
</organism>
<keyword id="KW-0067">ATP-binding</keyword>
<keyword id="KW-0131">Cell cycle</keyword>
<keyword id="KW-0132">Cell division</keyword>
<keyword id="KW-0133">Cell shape</keyword>
<keyword id="KW-0961">Cell wall biogenesis/degradation</keyword>
<keyword id="KW-0963">Cytoplasm</keyword>
<keyword id="KW-0436">Ligase</keyword>
<keyword id="KW-0547">Nucleotide-binding</keyword>
<keyword id="KW-0573">Peptidoglycan synthesis</keyword>
<sequence>MVENQRAMPQPEMRRIRRIHFVGIGGVGMCGIAEVLLNLGYEVSGSDLKGSAVTERLESFGAQIFVGHRAENTVGADVLVVSSAVNTSNPEVATALERRIPVVPRAEMLAELMRYRHGIAVAGTHGKTTTTSLIASVFAAGGLDPTFVIGGRLNAAGTNAQLGTSRYLIAEADESDASFLHLQPLVAVVTNIDADHMATYEGDFNKLKKTFVEFLHNLPFYGLAVMCIDDPVVREILPLVKRPTLTYGFSESADIRAINVRQDGMLTFFTVLRRDREPLDVSVNMPGNHNVLNSLATIAIATDEGVSDEAIVQGLSGFQGVGRRFQVYGELPVEGGNVMLVDDYGHHPREVSAVISAVRGGWPDRRLVMVYQPHRFSRTRDLYDDFVQVLADANVLLLMEVYPAGEEPIPGADSRNLCHSIRQRGQLDPIYIERGVELAPLVKPLLRAGDILLCQGAGDIGGLAPQLLKSPLFAGAKAAPTEGKLK</sequence>
<dbReference type="EC" id="6.3.2.8" evidence="1"/>
<dbReference type="EMBL" id="CP000058">
    <property type="protein sequence ID" value="AAZ35662.1"/>
    <property type="molecule type" value="Genomic_DNA"/>
</dbReference>
<dbReference type="RefSeq" id="WP_004656514.1">
    <property type="nucleotide sequence ID" value="NC_005773.3"/>
</dbReference>
<dbReference type="SMR" id="Q48EF9"/>
<dbReference type="KEGG" id="psp:PSPPH_4107"/>
<dbReference type="eggNOG" id="COG0773">
    <property type="taxonomic scope" value="Bacteria"/>
</dbReference>
<dbReference type="HOGENOM" id="CLU_028104_2_2_6"/>
<dbReference type="UniPathway" id="UPA00219"/>
<dbReference type="Proteomes" id="UP000000551">
    <property type="component" value="Chromosome"/>
</dbReference>
<dbReference type="GO" id="GO:0005737">
    <property type="term" value="C:cytoplasm"/>
    <property type="evidence" value="ECO:0007669"/>
    <property type="project" value="UniProtKB-SubCell"/>
</dbReference>
<dbReference type="GO" id="GO:0005524">
    <property type="term" value="F:ATP binding"/>
    <property type="evidence" value="ECO:0007669"/>
    <property type="project" value="UniProtKB-UniRule"/>
</dbReference>
<dbReference type="GO" id="GO:0008763">
    <property type="term" value="F:UDP-N-acetylmuramate-L-alanine ligase activity"/>
    <property type="evidence" value="ECO:0007669"/>
    <property type="project" value="UniProtKB-UniRule"/>
</dbReference>
<dbReference type="GO" id="GO:0051301">
    <property type="term" value="P:cell division"/>
    <property type="evidence" value="ECO:0007669"/>
    <property type="project" value="UniProtKB-KW"/>
</dbReference>
<dbReference type="GO" id="GO:0071555">
    <property type="term" value="P:cell wall organization"/>
    <property type="evidence" value="ECO:0007669"/>
    <property type="project" value="UniProtKB-KW"/>
</dbReference>
<dbReference type="GO" id="GO:0009252">
    <property type="term" value="P:peptidoglycan biosynthetic process"/>
    <property type="evidence" value="ECO:0007669"/>
    <property type="project" value="UniProtKB-UniRule"/>
</dbReference>
<dbReference type="GO" id="GO:0008360">
    <property type="term" value="P:regulation of cell shape"/>
    <property type="evidence" value="ECO:0007669"/>
    <property type="project" value="UniProtKB-KW"/>
</dbReference>
<dbReference type="FunFam" id="3.40.1190.10:FF:000001">
    <property type="entry name" value="UDP-N-acetylmuramate--L-alanine ligase"/>
    <property type="match status" value="1"/>
</dbReference>
<dbReference type="Gene3D" id="3.90.190.20">
    <property type="entry name" value="Mur ligase, C-terminal domain"/>
    <property type="match status" value="1"/>
</dbReference>
<dbReference type="Gene3D" id="3.40.1190.10">
    <property type="entry name" value="Mur-like, catalytic domain"/>
    <property type="match status" value="1"/>
</dbReference>
<dbReference type="Gene3D" id="3.40.50.720">
    <property type="entry name" value="NAD(P)-binding Rossmann-like Domain"/>
    <property type="match status" value="1"/>
</dbReference>
<dbReference type="HAMAP" id="MF_00046">
    <property type="entry name" value="MurC"/>
    <property type="match status" value="1"/>
</dbReference>
<dbReference type="InterPro" id="IPR036565">
    <property type="entry name" value="Mur-like_cat_sf"/>
</dbReference>
<dbReference type="InterPro" id="IPR004101">
    <property type="entry name" value="Mur_ligase_C"/>
</dbReference>
<dbReference type="InterPro" id="IPR036615">
    <property type="entry name" value="Mur_ligase_C_dom_sf"/>
</dbReference>
<dbReference type="InterPro" id="IPR013221">
    <property type="entry name" value="Mur_ligase_cen"/>
</dbReference>
<dbReference type="InterPro" id="IPR000713">
    <property type="entry name" value="Mur_ligase_N"/>
</dbReference>
<dbReference type="InterPro" id="IPR050061">
    <property type="entry name" value="MurCDEF_pg_biosynth"/>
</dbReference>
<dbReference type="InterPro" id="IPR005758">
    <property type="entry name" value="UDP-N-AcMur_Ala_ligase_MurC"/>
</dbReference>
<dbReference type="NCBIfam" id="TIGR01082">
    <property type="entry name" value="murC"/>
    <property type="match status" value="1"/>
</dbReference>
<dbReference type="PANTHER" id="PTHR43445:SF3">
    <property type="entry name" value="UDP-N-ACETYLMURAMATE--L-ALANINE LIGASE"/>
    <property type="match status" value="1"/>
</dbReference>
<dbReference type="PANTHER" id="PTHR43445">
    <property type="entry name" value="UDP-N-ACETYLMURAMATE--L-ALANINE LIGASE-RELATED"/>
    <property type="match status" value="1"/>
</dbReference>
<dbReference type="Pfam" id="PF01225">
    <property type="entry name" value="Mur_ligase"/>
    <property type="match status" value="1"/>
</dbReference>
<dbReference type="Pfam" id="PF02875">
    <property type="entry name" value="Mur_ligase_C"/>
    <property type="match status" value="1"/>
</dbReference>
<dbReference type="Pfam" id="PF08245">
    <property type="entry name" value="Mur_ligase_M"/>
    <property type="match status" value="1"/>
</dbReference>
<dbReference type="SUPFAM" id="SSF51984">
    <property type="entry name" value="MurCD N-terminal domain"/>
    <property type="match status" value="1"/>
</dbReference>
<dbReference type="SUPFAM" id="SSF53623">
    <property type="entry name" value="MurD-like peptide ligases, catalytic domain"/>
    <property type="match status" value="1"/>
</dbReference>
<dbReference type="SUPFAM" id="SSF53244">
    <property type="entry name" value="MurD-like peptide ligases, peptide-binding domain"/>
    <property type="match status" value="1"/>
</dbReference>
<proteinExistence type="inferred from homology"/>
<reference key="1">
    <citation type="journal article" date="2005" name="J. Bacteriol.">
        <title>Whole-genome sequence analysis of Pseudomonas syringae pv. phaseolicola 1448A reveals divergence among pathovars in genes involved in virulence and transposition.</title>
        <authorList>
            <person name="Joardar V."/>
            <person name="Lindeberg M."/>
            <person name="Jackson R.W."/>
            <person name="Selengut J."/>
            <person name="Dodson R."/>
            <person name="Brinkac L.M."/>
            <person name="Daugherty S.C."/>
            <person name="DeBoy R.T."/>
            <person name="Durkin A.S."/>
            <person name="Gwinn Giglio M."/>
            <person name="Madupu R."/>
            <person name="Nelson W.C."/>
            <person name="Rosovitz M.J."/>
            <person name="Sullivan S.A."/>
            <person name="Crabtree J."/>
            <person name="Creasy T."/>
            <person name="Davidsen T.M."/>
            <person name="Haft D.H."/>
            <person name="Zafar N."/>
            <person name="Zhou L."/>
            <person name="Halpin R."/>
            <person name="Holley T."/>
            <person name="Khouri H.M."/>
            <person name="Feldblyum T.V."/>
            <person name="White O."/>
            <person name="Fraser C.M."/>
            <person name="Chatterjee A.K."/>
            <person name="Cartinhour S."/>
            <person name="Schneider D."/>
            <person name="Mansfield J.W."/>
            <person name="Collmer A."/>
            <person name="Buell R."/>
        </authorList>
    </citation>
    <scope>NUCLEOTIDE SEQUENCE [LARGE SCALE GENOMIC DNA]</scope>
    <source>
        <strain>1448A / Race 6</strain>
    </source>
</reference>
<comment type="function">
    <text evidence="1">Cell wall formation.</text>
</comment>
<comment type="catalytic activity">
    <reaction evidence="1">
        <text>UDP-N-acetyl-alpha-D-muramate + L-alanine + ATP = UDP-N-acetyl-alpha-D-muramoyl-L-alanine + ADP + phosphate + H(+)</text>
        <dbReference type="Rhea" id="RHEA:23372"/>
        <dbReference type="ChEBI" id="CHEBI:15378"/>
        <dbReference type="ChEBI" id="CHEBI:30616"/>
        <dbReference type="ChEBI" id="CHEBI:43474"/>
        <dbReference type="ChEBI" id="CHEBI:57972"/>
        <dbReference type="ChEBI" id="CHEBI:70757"/>
        <dbReference type="ChEBI" id="CHEBI:83898"/>
        <dbReference type="ChEBI" id="CHEBI:456216"/>
        <dbReference type="EC" id="6.3.2.8"/>
    </reaction>
</comment>
<comment type="pathway">
    <text evidence="1">Cell wall biogenesis; peptidoglycan biosynthesis.</text>
</comment>
<comment type="subcellular location">
    <subcellularLocation>
        <location evidence="1">Cytoplasm</location>
    </subcellularLocation>
</comment>
<comment type="similarity">
    <text evidence="1">Belongs to the MurCDEF family.</text>
</comment>